<gene>
    <name type="primary">MRH4</name>
    <name type="ordered locus">YGL064C</name>
</gene>
<sequence>MSLFFKPVISPQWSFPVLLKIGVRSYAGGPRTKHKGNSPLASVPTGSSNKNRKQKAKGKKGNKKNDPDQAFNFGEYGGLKKDVEMNMDSTNKLIQKISNFDQLLILPPVRDAVKEIISKESLKLQDSRKKTSENIIPSPIQTVAIKRISKNLMDPKLQIHAIAAETGSGKTMAYLIPLIDYLKRQELETPELWETLRKNVLIRSIILVPTHELVDQVYETVSKTKTLLGLNSFKWDKATSYRDLLENIKNRIDILVTTPGKLLNLFSIRMITRPDKVLSKVGFVVLDEADTLLDRSWLEETHSAIKRIPNINHLIFCSATIPQEFNKTMQRLFPTVVPIMTPRLHKLPFALDFKVINSALSPFKGSKIKALAQTLYAISNDDTEPGFEKRCIIFVNEKKNVPEIVNLLNKKFGHNAIGLTGEDTFEERSEKIMPFLSPPRPLSEVVAQSTSPPTSLKKFEIPDSNIVIGKLKNTNSNGTAPSNKSLHVLVTTDLMARGLNFKGVRNVVLYDVPKTSIDLIHRVGRTARMKQGGRVFMLTDSKTKSWAKALPKIIKKHQRLS</sequence>
<dbReference type="EC" id="3.6.4.13"/>
<dbReference type="EMBL" id="Z72586">
    <property type="protein sequence ID" value="CAA96767.1"/>
    <property type="molecule type" value="Genomic_DNA"/>
</dbReference>
<dbReference type="EMBL" id="BK006941">
    <property type="protein sequence ID" value="DAA08038.1"/>
    <property type="molecule type" value="Genomic_DNA"/>
</dbReference>
<dbReference type="PIR" id="S64068">
    <property type="entry name" value="S64068"/>
</dbReference>
<dbReference type="RefSeq" id="NP_011451.1">
    <property type="nucleotide sequence ID" value="NM_001180929.1"/>
</dbReference>
<dbReference type="SMR" id="P53166"/>
<dbReference type="BioGRID" id="33183">
    <property type="interactions" value="117"/>
</dbReference>
<dbReference type="DIP" id="DIP-6672N"/>
<dbReference type="FunCoup" id="P53166">
    <property type="interactions" value="182"/>
</dbReference>
<dbReference type="IntAct" id="P53166">
    <property type="interactions" value="12"/>
</dbReference>
<dbReference type="MINT" id="P53166"/>
<dbReference type="STRING" id="4932.YGL064C"/>
<dbReference type="iPTMnet" id="P53166"/>
<dbReference type="PaxDb" id="4932-YGL064C"/>
<dbReference type="PeptideAtlas" id="P53166"/>
<dbReference type="EnsemblFungi" id="YGL064C_mRNA">
    <property type="protein sequence ID" value="YGL064C"/>
    <property type="gene ID" value="YGL064C"/>
</dbReference>
<dbReference type="GeneID" id="852816"/>
<dbReference type="KEGG" id="sce:YGL064C"/>
<dbReference type="AGR" id="SGD:S000003032"/>
<dbReference type="SGD" id="S000003032">
    <property type="gene designation" value="MRH4"/>
</dbReference>
<dbReference type="VEuPathDB" id="FungiDB:YGL064C"/>
<dbReference type="eggNOG" id="KOG0335">
    <property type="taxonomic scope" value="Eukaryota"/>
</dbReference>
<dbReference type="GeneTree" id="ENSGT00940000161738"/>
<dbReference type="HOGENOM" id="CLU_003041_18_0_1"/>
<dbReference type="InParanoid" id="P53166"/>
<dbReference type="OMA" id="HSTIDFI"/>
<dbReference type="OrthoDB" id="10256233at2759"/>
<dbReference type="BioCyc" id="YEAST:G3O-30570-MONOMER"/>
<dbReference type="BioGRID-ORCS" id="852816">
    <property type="hits" value="1 hit in 10 CRISPR screens"/>
</dbReference>
<dbReference type="PRO" id="PR:P53166"/>
<dbReference type="Proteomes" id="UP000002311">
    <property type="component" value="Chromosome VII"/>
</dbReference>
<dbReference type="RNAct" id="P53166">
    <property type="molecule type" value="protein"/>
</dbReference>
<dbReference type="GO" id="GO:0005759">
    <property type="term" value="C:mitochondrial matrix"/>
    <property type="evidence" value="ECO:0000314"/>
    <property type="project" value="SGD"/>
</dbReference>
<dbReference type="GO" id="GO:0005739">
    <property type="term" value="C:mitochondrion"/>
    <property type="evidence" value="ECO:0000314"/>
    <property type="project" value="SGD"/>
</dbReference>
<dbReference type="GO" id="GO:0005730">
    <property type="term" value="C:nucleolus"/>
    <property type="evidence" value="ECO:0000318"/>
    <property type="project" value="GO_Central"/>
</dbReference>
<dbReference type="GO" id="GO:0005524">
    <property type="term" value="F:ATP binding"/>
    <property type="evidence" value="ECO:0007669"/>
    <property type="project" value="UniProtKB-KW"/>
</dbReference>
<dbReference type="GO" id="GO:0016887">
    <property type="term" value="F:ATP hydrolysis activity"/>
    <property type="evidence" value="ECO:0007669"/>
    <property type="project" value="RHEA"/>
</dbReference>
<dbReference type="GO" id="GO:1990400">
    <property type="term" value="F:mitochondrial ribosomal large subunit rRNA binding"/>
    <property type="evidence" value="ECO:0000314"/>
    <property type="project" value="SGD"/>
</dbReference>
<dbReference type="GO" id="GO:0003724">
    <property type="term" value="F:RNA helicase activity"/>
    <property type="evidence" value="ECO:0000315"/>
    <property type="project" value="SGD"/>
</dbReference>
<dbReference type="GO" id="GO:0000463">
    <property type="term" value="P:maturation of LSU-rRNA from tricistronic rRNA transcript (SSU-rRNA, 5.8S rRNA, LSU-rRNA)"/>
    <property type="evidence" value="ECO:0000318"/>
    <property type="project" value="GO_Central"/>
</dbReference>
<dbReference type="GO" id="GO:1902775">
    <property type="term" value="P:mitochondrial large ribosomal subunit assembly"/>
    <property type="evidence" value="ECO:0000315"/>
    <property type="project" value="SGD"/>
</dbReference>
<dbReference type="GO" id="GO:0016070">
    <property type="term" value="P:RNA metabolic process"/>
    <property type="evidence" value="ECO:0000315"/>
    <property type="project" value="SGD"/>
</dbReference>
<dbReference type="CDD" id="cd17965">
    <property type="entry name" value="DEADc_MRH4"/>
    <property type="match status" value="1"/>
</dbReference>
<dbReference type="CDD" id="cd18787">
    <property type="entry name" value="SF2_C_DEAD"/>
    <property type="match status" value="1"/>
</dbReference>
<dbReference type="Gene3D" id="3.40.50.300">
    <property type="entry name" value="P-loop containing nucleotide triphosphate hydrolases"/>
    <property type="match status" value="2"/>
</dbReference>
<dbReference type="InterPro" id="IPR011545">
    <property type="entry name" value="DEAD/DEAH_box_helicase_dom"/>
</dbReference>
<dbReference type="InterPro" id="IPR014001">
    <property type="entry name" value="Helicase_ATP-bd"/>
</dbReference>
<dbReference type="InterPro" id="IPR001650">
    <property type="entry name" value="Helicase_C-like"/>
</dbReference>
<dbReference type="InterPro" id="IPR027417">
    <property type="entry name" value="P-loop_NTPase"/>
</dbReference>
<dbReference type="PANTHER" id="PTHR47960">
    <property type="entry name" value="DEAD-BOX ATP-DEPENDENT RNA HELICASE 50"/>
    <property type="match status" value="1"/>
</dbReference>
<dbReference type="Pfam" id="PF00270">
    <property type="entry name" value="DEAD"/>
    <property type="match status" value="1"/>
</dbReference>
<dbReference type="Pfam" id="PF00271">
    <property type="entry name" value="Helicase_C"/>
    <property type="match status" value="1"/>
</dbReference>
<dbReference type="SMART" id="SM00487">
    <property type="entry name" value="DEXDc"/>
    <property type="match status" value="1"/>
</dbReference>
<dbReference type="SMART" id="SM00490">
    <property type="entry name" value="HELICc"/>
    <property type="match status" value="1"/>
</dbReference>
<dbReference type="SUPFAM" id="SSF52540">
    <property type="entry name" value="P-loop containing nucleoside triphosphate hydrolases"/>
    <property type="match status" value="1"/>
</dbReference>
<dbReference type="PROSITE" id="PS51192">
    <property type="entry name" value="HELICASE_ATP_BIND_1"/>
    <property type="match status" value="1"/>
</dbReference>
<dbReference type="PROSITE" id="PS51194">
    <property type="entry name" value="HELICASE_CTER"/>
    <property type="match status" value="1"/>
</dbReference>
<protein>
    <recommendedName>
        <fullName>ATP-dependent RNA helicase MRH4, mitochondrial</fullName>
        <ecNumber>3.6.4.13</ecNumber>
    </recommendedName>
    <alternativeName>
        <fullName>Mitochondrial RNA helicase 4</fullName>
    </alternativeName>
</protein>
<proteinExistence type="evidence at protein level"/>
<evidence type="ECO:0000255" key="1"/>
<evidence type="ECO:0000255" key="2">
    <source>
        <dbReference type="PROSITE-ProRule" id="PRU00541"/>
    </source>
</evidence>
<evidence type="ECO:0000255" key="3">
    <source>
        <dbReference type="PROSITE-ProRule" id="PRU00542"/>
    </source>
</evidence>
<evidence type="ECO:0000256" key="4">
    <source>
        <dbReference type="SAM" id="MobiDB-lite"/>
    </source>
</evidence>
<evidence type="ECO:0000269" key="5">
    <source>
    </source>
</evidence>
<evidence type="ECO:0000269" key="6">
    <source>
    </source>
</evidence>
<evidence type="ECO:0000269" key="7">
    <source>
    </source>
</evidence>
<evidence type="ECO:0000269" key="8">
    <source>
    </source>
</evidence>
<evidence type="ECO:0000269" key="9">
    <source>
    </source>
</evidence>
<evidence type="ECO:0000305" key="10"/>
<organism>
    <name type="scientific">Saccharomyces cerevisiae (strain ATCC 204508 / S288c)</name>
    <name type="common">Baker's yeast</name>
    <dbReference type="NCBI Taxonomy" id="559292"/>
    <lineage>
        <taxon>Eukaryota</taxon>
        <taxon>Fungi</taxon>
        <taxon>Dikarya</taxon>
        <taxon>Ascomycota</taxon>
        <taxon>Saccharomycotina</taxon>
        <taxon>Saccharomycetes</taxon>
        <taxon>Saccharomycetales</taxon>
        <taxon>Saccharomycetaceae</taxon>
        <taxon>Saccharomyces</taxon>
    </lineage>
</organism>
<name>MRH4_YEAST</name>
<reference key="1">
    <citation type="journal article" date="1997" name="Yeast">
        <title>The characterization of two new clusters of duplicated genes suggests a 'Lego' organization of the yeast Saccharomyces cerevisiae chromosomes.</title>
        <authorList>
            <person name="Feuermann M."/>
            <person name="de Montigny J."/>
            <person name="Potier S."/>
            <person name="Souciet J.-L."/>
        </authorList>
    </citation>
    <scope>NUCLEOTIDE SEQUENCE [GENOMIC DNA]</scope>
    <source>
        <strain>ATCC 204508 / S288c</strain>
    </source>
</reference>
<reference key="2">
    <citation type="journal article" date="1997" name="Nature">
        <title>The nucleotide sequence of Saccharomyces cerevisiae chromosome VII.</title>
        <authorList>
            <person name="Tettelin H."/>
            <person name="Agostoni-Carbone M.L."/>
            <person name="Albermann K."/>
            <person name="Albers M."/>
            <person name="Arroyo J."/>
            <person name="Backes U."/>
            <person name="Barreiros T."/>
            <person name="Bertani I."/>
            <person name="Bjourson A.J."/>
            <person name="Brueckner M."/>
            <person name="Bruschi C.V."/>
            <person name="Carignani G."/>
            <person name="Castagnoli L."/>
            <person name="Cerdan E."/>
            <person name="Clemente M.L."/>
            <person name="Coblenz A."/>
            <person name="Coglievina M."/>
            <person name="Coissac E."/>
            <person name="Defoor E."/>
            <person name="Del Bino S."/>
            <person name="Delius H."/>
            <person name="Delneri D."/>
            <person name="de Wergifosse P."/>
            <person name="Dujon B."/>
            <person name="Durand P."/>
            <person name="Entian K.-D."/>
            <person name="Eraso P."/>
            <person name="Escribano V."/>
            <person name="Fabiani L."/>
            <person name="Fartmann B."/>
            <person name="Feroli F."/>
            <person name="Feuermann M."/>
            <person name="Frontali L."/>
            <person name="Garcia-Gonzalez M."/>
            <person name="Garcia-Saez M.I."/>
            <person name="Goffeau A."/>
            <person name="Guerreiro P."/>
            <person name="Hani J."/>
            <person name="Hansen M."/>
            <person name="Hebling U."/>
            <person name="Hernandez K."/>
            <person name="Heumann K."/>
            <person name="Hilger F."/>
            <person name="Hofmann B."/>
            <person name="Indge K.J."/>
            <person name="James C.M."/>
            <person name="Klima R."/>
            <person name="Koetter P."/>
            <person name="Kramer B."/>
            <person name="Kramer W."/>
            <person name="Lauquin G."/>
            <person name="Leuther H."/>
            <person name="Louis E.J."/>
            <person name="Maillier E."/>
            <person name="Marconi A."/>
            <person name="Martegani E."/>
            <person name="Mazon M.J."/>
            <person name="Mazzoni C."/>
            <person name="McReynolds A.D.K."/>
            <person name="Melchioretto P."/>
            <person name="Mewes H.-W."/>
            <person name="Minenkova O."/>
            <person name="Mueller-Auer S."/>
            <person name="Nawrocki A."/>
            <person name="Netter P."/>
            <person name="Neu R."/>
            <person name="Nombela C."/>
            <person name="Oliver S.G."/>
            <person name="Panzeri L."/>
            <person name="Paoluzi S."/>
            <person name="Plevani P."/>
            <person name="Portetelle D."/>
            <person name="Portillo F."/>
            <person name="Potier S."/>
            <person name="Purnelle B."/>
            <person name="Rieger M."/>
            <person name="Riles L."/>
            <person name="Rinaldi T."/>
            <person name="Robben J."/>
            <person name="Rodrigues-Pousada C."/>
            <person name="Rodriguez-Belmonte E."/>
            <person name="Rodriguez-Torres A.M."/>
            <person name="Rose M."/>
            <person name="Ruzzi M."/>
            <person name="Saliola M."/>
            <person name="Sanchez-Perez M."/>
            <person name="Schaefer B."/>
            <person name="Schaefer M."/>
            <person name="Scharfe M."/>
            <person name="Schmidheini T."/>
            <person name="Schreer A."/>
            <person name="Skala J."/>
            <person name="Souciet J.-L."/>
            <person name="Steensma H.Y."/>
            <person name="Talla E."/>
            <person name="Thierry A."/>
            <person name="Vandenbol M."/>
            <person name="van der Aart Q.J.M."/>
            <person name="Van Dyck L."/>
            <person name="Vanoni M."/>
            <person name="Verhasselt P."/>
            <person name="Voet M."/>
            <person name="Volckaert G."/>
            <person name="Wambutt R."/>
            <person name="Watson M.D."/>
            <person name="Weber N."/>
            <person name="Wedler E."/>
            <person name="Wedler H."/>
            <person name="Wipfli P."/>
            <person name="Wolf K."/>
            <person name="Wright L.F."/>
            <person name="Zaccaria P."/>
            <person name="Zimmermann M."/>
            <person name="Zollner A."/>
            <person name="Kleine K."/>
        </authorList>
    </citation>
    <scope>NUCLEOTIDE SEQUENCE [LARGE SCALE GENOMIC DNA]</scope>
    <source>
        <strain>ATCC 204508 / S288c</strain>
    </source>
</reference>
<reference key="3">
    <citation type="journal article" date="2014" name="G3 (Bethesda)">
        <title>The reference genome sequence of Saccharomyces cerevisiae: Then and now.</title>
        <authorList>
            <person name="Engel S.R."/>
            <person name="Dietrich F.S."/>
            <person name="Fisk D.G."/>
            <person name="Binkley G."/>
            <person name="Balakrishnan R."/>
            <person name="Costanzo M.C."/>
            <person name="Dwight S.S."/>
            <person name="Hitz B.C."/>
            <person name="Karra K."/>
            <person name="Nash R.S."/>
            <person name="Weng S."/>
            <person name="Wong E.D."/>
            <person name="Lloyd P."/>
            <person name="Skrzypek M.S."/>
            <person name="Miyasato S.R."/>
            <person name="Simison M."/>
            <person name="Cherry J.M."/>
        </authorList>
    </citation>
    <scope>GENOME REANNOTATION</scope>
    <source>
        <strain>ATCC 204508 / S288c</strain>
    </source>
</reference>
<reference key="4">
    <citation type="journal article" date="1999" name="Yeast">
        <title>Systematic identification, classification, and characterization of the open reading frames which encode novel helicase-related proteins in Saccharomyces cerevisiae by gene disruption and Northern analysis.</title>
        <authorList>
            <person name="Shiratori A."/>
            <person name="Shibata T."/>
            <person name="Arisawa M."/>
            <person name="Hanaoka F."/>
            <person name="Murakami Y."/>
            <person name="Eki T."/>
        </authorList>
    </citation>
    <scope>FUNCTION</scope>
</reference>
<reference key="5">
    <citation type="journal article" date="2002" name="FEMS Yeast Res.">
        <title>A novel mitochondrial DEAD box protein (Mrh4) required for maintenance of mtDNA in Saccharomyces cerevisiae.</title>
        <authorList>
            <person name="Schmidt U."/>
            <person name="Lehmann K."/>
            <person name="Stahl U."/>
        </authorList>
    </citation>
    <scope>FUNCTION</scope>
    <scope>SUBCELLULAR LOCATION</scope>
    <scope>VARIANTS SER-67 AND SER-438</scope>
    <source>
        <strain>DBY947</strain>
    </source>
</reference>
<reference key="6">
    <citation type="journal article" date="2003" name="Nature">
        <title>Global analysis of protein localization in budding yeast.</title>
        <authorList>
            <person name="Huh W.-K."/>
            <person name="Falvo J.V."/>
            <person name="Gerke L.C."/>
            <person name="Carroll A.S."/>
            <person name="Howson R.W."/>
            <person name="Weissman J.S."/>
            <person name="O'Shea E.K."/>
        </authorList>
    </citation>
    <scope>SUBCELLULAR LOCATION [LARGE SCALE ANALYSIS]</scope>
</reference>
<reference key="7">
    <citation type="journal article" date="2003" name="Nature">
        <title>Global analysis of protein expression in yeast.</title>
        <authorList>
            <person name="Ghaemmaghami S."/>
            <person name="Huh W.-K."/>
            <person name="Bower K."/>
            <person name="Howson R.W."/>
            <person name="Belle A."/>
            <person name="Dephoure N."/>
            <person name="O'Shea E.K."/>
            <person name="Weissman J.S."/>
        </authorList>
    </citation>
    <scope>LEVEL OF PROTEIN EXPRESSION [LARGE SCALE ANALYSIS]</scope>
</reference>
<reference key="8">
    <citation type="journal article" date="2003" name="Proc. Natl. Acad. Sci. U.S.A.">
        <title>The proteome of Saccharomyces cerevisiae mitochondria.</title>
        <authorList>
            <person name="Sickmann A."/>
            <person name="Reinders J."/>
            <person name="Wagner Y."/>
            <person name="Joppich C."/>
            <person name="Zahedi R.P."/>
            <person name="Meyer H.E."/>
            <person name="Schoenfisch B."/>
            <person name="Perschil I."/>
            <person name="Chacinska A."/>
            <person name="Guiard B."/>
            <person name="Rehling P."/>
            <person name="Pfanner N."/>
            <person name="Meisinger C."/>
        </authorList>
    </citation>
    <scope>SUBCELLULAR LOCATION [LARGE SCALE ANALYSIS]</scope>
    <source>
        <strain>ATCC 76625 / YPH499</strain>
    </source>
</reference>
<comment type="function">
    <text evidence="5 6">ATP-binding RNA helicase involved in mitochondrial RNA metabolism. Required for maintenance of mitochondrial DNA.</text>
</comment>
<comment type="catalytic activity">
    <reaction>
        <text>ATP + H2O = ADP + phosphate + H(+)</text>
        <dbReference type="Rhea" id="RHEA:13065"/>
        <dbReference type="ChEBI" id="CHEBI:15377"/>
        <dbReference type="ChEBI" id="CHEBI:15378"/>
        <dbReference type="ChEBI" id="CHEBI:30616"/>
        <dbReference type="ChEBI" id="CHEBI:43474"/>
        <dbReference type="ChEBI" id="CHEBI:456216"/>
        <dbReference type="EC" id="3.6.4.13"/>
    </reaction>
</comment>
<comment type="subcellular location">
    <subcellularLocation>
        <location evidence="6 7 9">Mitochondrion</location>
    </subcellularLocation>
</comment>
<comment type="domain">
    <text>The Q motif is unique to and characteristic of the DEAD box family of RNA helicases and controls ATP binding and hydrolysis.</text>
</comment>
<comment type="miscellaneous">
    <text evidence="8">Present with 736 molecules/cell in log phase SD medium.</text>
</comment>
<comment type="similarity">
    <text evidence="10">Belongs to the DEAD box helicase family. MRH4 subfamily.</text>
</comment>
<keyword id="KW-0067">ATP-binding</keyword>
<keyword id="KW-0347">Helicase</keyword>
<keyword id="KW-0378">Hydrolase</keyword>
<keyword id="KW-0496">Mitochondrion</keyword>
<keyword id="KW-0547">Nucleotide-binding</keyword>
<keyword id="KW-1185">Reference proteome</keyword>
<keyword id="KW-0694">RNA-binding</keyword>
<keyword id="KW-0809">Transit peptide</keyword>
<feature type="transit peptide" description="Mitochondrion" evidence="1">
    <location>
        <begin position="1"/>
        <end position="26"/>
    </location>
</feature>
<feature type="chain" id="PRO_0000041929" description="ATP-dependent RNA helicase MRH4, mitochondrial">
    <location>
        <begin position="27"/>
        <end position="561"/>
    </location>
</feature>
<feature type="domain" description="Helicase ATP-binding" evidence="2">
    <location>
        <begin position="151"/>
        <end position="339"/>
    </location>
</feature>
<feature type="domain" description="Helicase C-terminal" evidence="3">
    <location>
        <begin position="370"/>
        <end position="561"/>
    </location>
</feature>
<feature type="region of interest" description="Disordered" evidence="4">
    <location>
        <begin position="29"/>
        <end position="72"/>
    </location>
</feature>
<feature type="short sequence motif" description="Q motif">
    <location>
        <begin position="117"/>
        <end position="141"/>
    </location>
</feature>
<feature type="short sequence motif" description="DEAD box">
    <location>
        <begin position="287"/>
        <end position="290"/>
    </location>
</feature>
<feature type="compositionally biased region" description="Basic residues" evidence="4">
    <location>
        <begin position="50"/>
        <end position="62"/>
    </location>
</feature>
<feature type="binding site" evidence="2">
    <location>
        <begin position="164"/>
        <end position="171"/>
    </location>
    <ligand>
        <name>ATP</name>
        <dbReference type="ChEBI" id="CHEBI:30616"/>
    </ligand>
</feature>
<feature type="sequence variant" description="In strain: DBY947." evidence="6">
    <original>P</original>
    <variation>S</variation>
    <location>
        <position position="67"/>
    </location>
</feature>
<feature type="sequence variant" description="In strain: DBY947." evidence="6">
    <original>P</original>
    <variation>S</variation>
    <location>
        <position position="438"/>
    </location>
</feature>
<accession>P53166</accession>
<accession>D6VU77</accession>